<name>ISC2B_MOUSE</name>
<feature type="chain" id="PRO_0000268673" description="Isochorismatase domain-containing protein 2B">
    <location>
        <begin position="1"/>
        <end position="210"/>
    </location>
</feature>
<feature type="modified residue" description="N6-succinyllysine" evidence="4">
    <location>
        <position position="178"/>
    </location>
</feature>
<feature type="sequence conflict" description="In Ref. 2; AAH49278." evidence="3" ref="2">
    <original>K</original>
    <variation>M</variation>
    <location>
        <position position="40"/>
    </location>
</feature>
<feature type="sequence conflict" description="In Ref. 2; AAH49278." evidence="3" ref="2">
    <original>C</original>
    <variation>R</variation>
    <location>
        <position position="107"/>
    </location>
</feature>
<organism>
    <name type="scientific">Mus musculus</name>
    <name type="common">Mouse</name>
    <dbReference type="NCBI Taxonomy" id="10090"/>
    <lineage>
        <taxon>Eukaryota</taxon>
        <taxon>Metazoa</taxon>
        <taxon>Chordata</taxon>
        <taxon>Craniata</taxon>
        <taxon>Vertebrata</taxon>
        <taxon>Euteleostomi</taxon>
        <taxon>Mammalia</taxon>
        <taxon>Eutheria</taxon>
        <taxon>Euarchontoglires</taxon>
        <taxon>Glires</taxon>
        <taxon>Rodentia</taxon>
        <taxon>Myomorpha</taxon>
        <taxon>Muroidea</taxon>
        <taxon>Muridae</taxon>
        <taxon>Murinae</taxon>
        <taxon>Mus</taxon>
        <taxon>Mus</taxon>
    </lineage>
</organism>
<evidence type="ECO:0000250" key="1"/>
<evidence type="ECO:0000269" key="2">
    <source>
    </source>
</evidence>
<evidence type="ECO:0000305" key="3"/>
<evidence type="ECO:0007744" key="4">
    <source>
    </source>
</evidence>
<keyword id="KW-0963">Cytoplasm</keyword>
<keyword id="KW-0539">Nucleus</keyword>
<keyword id="KW-1185">Reference proteome</keyword>
<comment type="subunit">
    <text evidence="1">Interacts with CDKN2A.</text>
</comment>
<comment type="subcellular location">
    <subcellularLocation>
        <location evidence="1">Cytoplasm</location>
    </subcellularLocation>
    <subcellularLocation>
        <location evidence="1">Nucleus</location>
    </subcellularLocation>
    <text evidence="1">Localizes to the nucleus in the presence of CDKN2A.</text>
</comment>
<comment type="tissue specificity">
    <text evidence="2">Ubiquitous. Expressed predominantly in uterus, stomach and urinary tract.</text>
</comment>
<comment type="similarity">
    <text evidence="3">Belongs to the isochorismatase family.</text>
</comment>
<accession>Q9DCC7</accession>
<accession>Q80V19</accession>
<protein>
    <recommendedName>
        <fullName>Isochorismatase domain-containing protein 2B</fullName>
    </recommendedName>
</protein>
<sequence length="210" mass="23151">MGAAKASLGRIFPESSILFLCDMQEKLRDRILYFPQIVSKAARMLKVAQMLEIPVLLTEHYPQGLGPTVPELGAQGLRTMSKTSFSMVPPLQQELDKLPQLQSVLLCGIETQGCILHTALDLLDRGLQVHVAVDACSSQSEMNRLVALARMQQSGVFLSTSEVLILQLVKDAAHPQFKEIQKILKEPVTDIGLLGFFQGKKNSLLPNSRT</sequence>
<proteinExistence type="evidence at protein level"/>
<gene>
    <name type="primary">Isoc2b</name>
    <name type="synonym">Isoc2</name>
</gene>
<reference key="1">
    <citation type="journal article" date="2005" name="Science">
        <title>The transcriptional landscape of the mammalian genome.</title>
        <authorList>
            <person name="Carninci P."/>
            <person name="Kasukawa T."/>
            <person name="Katayama S."/>
            <person name="Gough J."/>
            <person name="Frith M.C."/>
            <person name="Maeda N."/>
            <person name="Oyama R."/>
            <person name="Ravasi T."/>
            <person name="Lenhard B."/>
            <person name="Wells C."/>
            <person name="Kodzius R."/>
            <person name="Shimokawa K."/>
            <person name="Bajic V.B."/>
            <person name="Brenner S.E."/>
            <person name="Batalov S."/>
            <person name="Forrest A.R."/>
            <person name="Zavolan M."/>
            <person name="Davis M.J."/>
            <person name="Wilming L.G."/>
            <person name="Aidinis V."/>
            <person name="Allen J.E."/>
            <person name="Ambesi-Impiombato A."/>
            <person name="Apweiler R."/>
            <person name="Aturaliya R.N."/>
            <person name="Bailey T.L."/>
            <person name="Bansal M."/>
            <person name="Baxter L."/>
            <person name="Beisel K.W."/>
            <person name="Bersano T."/>
            <person name="Bono H."/>
            <person name="Chalk A.M."/>
            <person name="Chiu K.P."/>
            <person name="Choudhary V."/>
            <person name="Christoffels A."/>
            <person name="Clutterbuck D.R."/>
            <person name="Crowe M.L."/>
            <person name="Dalla E."/>
            <person name="Dalrymple B.P."/>
            <person name="de Bono B."/>
            <person name="Della Gatta G."/>
            <person name="di Bernardo D."/>
            <person name="Down T."/>
            <person name="Engstrom P."/>
            <person name="Fagiolini M."/>
            <person name="Faulkner G."/>
            <person name="Fletcher C.F."/>
            <person name="Fukushima T."/>
            <person name="Furuno M."/>
            <person name="Futaki S."/>
            <person name="Gariboldi M."/>
            <person name="Georgii-Hemming P."/>
            <person name="Gingeras T.R."/>
            <person name="Gojobori T."/>
            <person name="Green R.E."/>
            <person name="Gustincich S."/>
            <person name="Harbers M."/>
            <person name="Hayashi Y."/>
            <person name="Hensch T.K."/>
            <person name="Hirokawa N."/>
            <person name="Hill D."/>
            <person name="Huminiecki L."/>
            <person name="Iacono M."/>
            <person name="Ikeo K."/>
            <person name="Iwama A."/>
            <person name="Ishikawa T."/>
            <person name="Jakt M."/>
            <person name="Kanapin A."/>
            <person name="Katoh M."/>
            <person name="Kawasawa Y."/>
            <person name="Kelso J."/>
            <person name="Kitamura H."/>
            <person name="Kitano H."/>
            <person name="Kollias G."/>
            <person name="Krishnan S.P."/>
            <person name="Kruger A."/>
            <person name="Kummerfeld S.K."/>
            <person name="Kurochkin I.V."/>
            <person name="Lareau L.F."/>
            <person name="Lazarevic D."/>
            <person name="Lipovich L."/>
            <person name="Liu J."/>
            <person name="Liuni S."/>
            <person name="McWilliam S."/>
            <person name="Madan Babu M."/>
            <person name="Madera M."/>
            <person name="Marchionni L."/>
            <person name="Matsuda H."/>
            <person name="Matsuzawa S."/>
            <person name="Miki H."/>
            <person name="Mignone F."/>
            <person name="Miyake S."/>
            <person name="Morris K."/>
            <person name="Mottagui-Tabar S."/>
            <person name="Mulder N."/>
            <person name="Nakano N."/>
            <person name="Nakauchi H."/>
            <person name="Ng P."/>
            <person name="Nilsson R."/>
            <person name="Nishiguchi S."/>
            <person name="Nishikawa S."/>
            <person name="Nori F."/>
            <person name="Ohara O."/>
            <person name="Okazaki Y."/>
            <person name="Orlando V."/>
            <person name="Pang K.C."/>
            <person name="Pavan W.J."/>
            <person name="Pavesi G."/>
            <person name="Pesole G."/>
            <person name="Petrovsky N."/>
            <person name="Piazza S."/>
            <person name="Reed J."/>
            <person name="Reid J.F."/>
            <person name="Ring B.Z."/>
            <person name="Ringwald M."/>
            <person name="Rost B."/>
            <person name="Ruan Y."/>
            <person name="Salzberg S.L."/>
            <person name="Sandelin A."/>
            <person name="Schneider C."/>
            <person name="Schoenbach C."/>
            <person name="Sekiguchi K."/>
            <person name="Semple C.A."/>
            <person name="Seno S."/>
            <person name="Sessa L."/>
            <person name="Sheng Y."/>
            <person name="Shibata Y."/>
            <person name="Shimada H."/>
            <person name="Shimada K."/>
            <person name="Silva D."/>
            <person name="Sinclair B."/>
            <person name="Sperling S."/>
            <person name="Stupka E."/>
            <person name="Sugiura K."/>
            <person name="Sultana R."/>
            <person name="Takenaka Y."/>
            <person name="Taki K."/>
            <person name="Tammoja K."/>
            <person name="Tan S.L."/>
            <person name="Tang S."/>
            <person name="Taylor M.S."/>
            <person name="Tegner J."/>
            <person name="Teichmann S.A."/>
            <person name="Ueda H.R."/>
            <person name="van Nimwegen E."/>
            <person name="Verardo R."/>
            <person name="Wei C.L."/>
            <person name="Yagi K."/>
            <person name="Yamanishi H."/>
            <person name="Zabarovsky E."/>
            <person name="Zhu S."/>
            <person name="Zimmer A."/>
            <person name="Hide W."/>
            <person name="Bult C."/>
            <person name="Grimmond S.M."/>
            <person name="Teasdale R.D."/>
            <person name="Liu E.T."/>
            <person name="Brusic V."/>
            <person name="Quackenbush J."/>
            <person name="Wahlestedt C."/>
            <person name="Mattick J.S."/>
            <person name="Hume D.A."/>
            <person name="Kai C."/>
            <person name="Sasaki D."/>
            <person name="Tomaru Y."/>
            <person name="Fukuda S."/>
            <person name="Kanamori-Katayama M."/>
            <person name="Suzuki M."/>
            <person name="Aoki J."/>
            <person name="Arakawa T."/>
            <person name="Iida J."/>
            <person name="Imamura K."/>
            <person name="Itoh M."/>
            <person name="Kato T."/>
            <person name="Kawaji H."/>
            <person name="Kawagashira N."/>
            <person name="Kawashima T."/>
            <person name="Kojima M."/>
            <person name="Kondo S."/>
            <person name="Konno H."/>
            <person name="Nakano K."/>
            <person name="Ninomiya N."/>
            <person name="Nishio T."/>
            <person name="Okada M."/>
            <person name="Plessy C."/>
            <person name="Shibata K."/>
            <person name="Shiraki T."/>
            <person name="Suzuki S."/>
            <person name="Tagami M."/>
            <person name="Waki K."/>
            <person name="Watahiki A."/>
            <person name="Okamura-Oho Y."/>
            <person name="Suzuki H."/>
            <person name="Kawai J."/>
            <person name="Hayashizaki Y."/>
        </authorList>
    </citation>
    <scope>NUCLEOTIDE SEQUENCE [LARGE SCALE MRNA]</scope>
    <source>
        <strain>C57BL/6J</strain>
        <tissue>Kidney</tissue>
    </source>
</reference>
<reference key="2">
    <citation type="journal article" date="2004" name="Genome Res.">
        <title>The status, quality, and expansion of the NIH full-length cDNA project: the Mammalian Gene Collection (MGC).</title>
        <authorList>
            <consortium name="The MGC Project Team"/>
        </authorList>
    </citation>
    <scope>NUCLEOTIDE SEQUENCE [LARGE SCALE MRNA]</scope>
    <source>
        <strain>FVB/N</strain>
        <tissue>Brain</tissue>
        <tissue>Mammary gland</tissue>
    </source>
</reference>
<reference key="3">
    <citation type="journal article" date="2007" name="Biochem. Biophys. Res. Commun.">
        <title>Identification and characterization of a novel protein ISOC2 that interacts with p16INK4a.</title>
        <authorList>
            <person name="Huang X."/>
            <person name="Shi Z."/>
            <person name="Wang W."/>
            <person name="Bai J."/>
            <person name="Chen Z."/>
            <person name="Xu J."/>
            <person name="Zhang D."/>
            <person name="Fu S."/>
        </authorList>
    </citation>
    <scope>TISSUE SPECIFICITY</scope>
</reference>
<reference key="4">
    <citation type="journal article" date="2013" name="Mol. Cell">
        <title>SIRT5-mediated lysine desuccinylation impacts diverse metabolic pathways.</title>
        <authorList>
            <person name="Park J."/>
            <person name="Chen Y."/>
            <person name="Tishkoff D.X."/>
            <person name="Peng C."/>
            <person name="Tan M."/>
            <person name="Dai L."/>
            <person name="Xie Z."/>
            <person name="Zhang Y."/>
            <person name="Zwaans B.M."/>
            <person name="Skinner M.E."/>
            <person name="Lombard D.B."/>
            <person name="Zhao Y."/>
        </authorList>
    </citation>
    <scope>SUCCINYLATION [LARGE SCALE ANALYSIS] AT LYS-178</scope>
    <scope>IDENTIFICATION BY MASS SPECTROMETRY [LARGE SCALE ANALYSIS]</scope>
    <source>
        <tissue>Liver</tissue>
    </source>
</reference>
<dbReference type="EMBL" id="AK002905">
    <property type="protein sequence ID" value="BAB22446.1"/>
    <property type="molecule type" value="mRNA"/>
</dbReference>
<dbReference type="EMBL" id="BC046756">
    <property type="protein sequence ID" value="AAH46756.1"/>
    <property type="molecule type" value="mRNA"/>
</dbReference>
<dbReference type="EMBL" id="BC049278">
    <property type="protein sequence ID" value="AAH49278.1"/>
    <property type="molecule type" value="mRNA"/>
</dbReference>
<dbReference type="CCDS" id="CCDS20748.1"/>
<dbReference type="RefSeq" id="NP_080434.1">
    <property type="nucleotide sequence ID" value="NM_026158.2"/>
</dbReference>
<dbReference type="SMR" id="Q9DCC7"/>
<dbReference type="FunCoup" id="Q9DCC7">
    <property type="interactions" value="756"/>
</dbReference>
<dbReference type="STRING" id="10090.ENSMUSP00000066859"/>
<dbReference type="GlyGen" id="Q9DCC7">
    <property type="glycosylation" value="1 site"/>
</dbReference>
<dbReference type="iPTMnet" id="Q9DCC7"/>
<dbReference type="PhosphoSitePlus" id="Q9DCC7"/>
<dbReference type="jPOST" id="Q9DCC7"/>
<dbReference type="PaxDb" id="10090-ENSMUSP00000066859"/>
<dbReference type="PeptideAtlas" id="Q9DCC7"/>
<dbReference type="ProteomicsDB" id="269508"/>
<dbReference type="DNASU" id="67441"/>
<dbReference type="Ensembl" id="ENSMUST00000064547.13">
    <property type="protein sequence ID" value="ENSMUSP00000066859.6"/>
    <property type="gene ID" value="ENSMUSG00000052605.13"/>
</dbReference>
<dbReference type="Ensembl" id="ENSMUST00000208816.2">
    <property type="protein sequence ID" value="ENSMUSP00000147085.2"/>
    <property type="gene ID" value="ENSMUSG00000052605.13"/>
</dbReference>
<dbReference type="GeneID" id="67441"/>
<dbReference type="KEGG" id="mmu:67441"/>
<dbReference type="UCSC" id="uc009eyw.1">
    <property type="organism name" value="mouse"/>
</dbReference>
<dbReference type="AGR" id="MGI:1914691"/>
<dbReference type="CTD" id="67441"/>
<dbReference type="MGI" id="MGI:1914691">
    <property type="gene designation" value="Isoc2b"/>
</dbReference>
<dbReference type="VEuPathDB" id="HostDB:ENSMUSG00000052605"/>
<dbReference type="eggNOG" id="KOG4044">
    <property type="taxonomic scope" value="Eukaryota"/>
</dbReference>
<dbReference type="GeneTree" id="ENSGT00390000006753"/>
<dbReference type="HOGENOM" id="CLU_066901_0_1_1"/>
<dbReference type="InParanoid" id="Q9DCC7"/>
<dbReference type="OMA" id="QAGCVIT"/>
<dbReference type="OrthoDB" id="269496at2759"/>
<dbReference type="PhylomeDB" id="Q9DCC7"/>
<dbReference type="TreeFam" id="TF313459"/>
<dbReference type="BioGRID-ORCS" id="67441">
    <property type="hits" value="0 hits in 76 CRISPR screens"/>
</dbReference>
<dbReference type="ChiTaRS" id="Isoc2b">
    <property type="organism name" value="mouse"/>
</dbReference>
<dbReference type="PRO" id="PR:Q9DCC7"/>
<dbReference type="Proteomes" id="UP000000589">
    <property type="component" value="Chromosome 7"/>
</dbReference>
<dbReference type="RNAct" id="Q9DCC7">
    <property type="molecule type" value="protein"/>
</dbReference>
<dbReference type="Bgee" id="ENSMUSG00000052605">
    <property type="expression patterns" value="Expressed in right kidney and 125 other cell types or tissues"/>
</dbReference>
<dbReference type="GO" id="GO:0005739">
    <property type="term" value="C:mitochondrion"/>
    <property type="evidence" value="ECO:0007005"/>
    <property type="project" value="MGI"/>
</dbReference>
<dbReference type="GO" id="GO:0005634">
    <property type="term" value="C:nucleus"/>
    <property type="evidence" value="ECO:0007669"/>
    <property type="project" value="UniProtKB-SubCell"/>
</dbReference>
<dbReference type="FunFam" id="3.40.50.850:FF:000001">
    <property type="entry name" value="Isochorismatase domain-containing protein 1"/>
    <property type="match status" value="1"/>
</dbReference>
<dbReference type="Gene3D" id="3.40.50.850">
    <property type="entry name" value="Isochorismatase-like"/>
    <property type="match status" value="1"/>
</dbReference>
<dbReference type="InterPro" id="IPR000868">
    <property type="entry name" value="Isochorismatase-like_dom"/>
</dbReference>
<dbReference type="InterPro" id="IPR036380">
    <property type="entry name" value="Isochorismatase-like_sf"/>
</dbReference>
<dbReference type="InterPro" id="IPR050993">
    <property type="entry name" value="Isochorismatase_domain"/>
</dbReference>
<dbReference type="PANTHER" id="PTHR14119">
    <property type="entry name" value="HYDROLASE"/>
    <property type="match status" value="1"/>
</dbReference>
<dbReference type="PANTHER" id="PTHR14119:SF5">
    <property type="entry name" value="ISOCHORISMATASE DOMAIN-CONTAINING PROTEIN 2B"/>
    <property type="match status" value="1"/>
</dbReference>
<dbReference type="Pfam" id="PF00857">
    <property type="entry name" value="Isochorismatase"/>
    <property type="match status" value="1"/>
</dbReference>
<dbReference type="SUPFAM" id="SSF52499">
    <property type="entry name" value="Isochorismatase-like hydrolases"/>
    <property type="match status" value="1"/>
</dbReference>